<feature type="chain" id="PRO_0000374419" description="tRNA-2-methylthio-N(6)-dimethylallyladenosine synthase">
    <location>
        <begin position="1"/>
        <end position="462"/>
    </location>
</feature>
<feature type="domain" description="MTTase N-terminal" evidence="1">
    <location>
        <begin position="18"/>
        <end position="138"/>
    </location>
</feature>
<feature type="domain" description="Radical SAM core" evidence="2">
    <location>
        <begin position="165"/>
        <end position="397"/>
    </location>
</feature>
<feature type="domain" description="TRAM" evidence="1">
    <location>
        <begin position="400"/>
        <end position="462"/>
    </location>
</feature>
<feature type="binding site" evidence="1">
    <location>
        <position position="27"/>
    </location>
    <ligand>
        <name>[4Fe-4S] cluster</name>
        <dbReference type="ChEBI" id="CHEBI:49883"/>
        <label>1</label>
    </ligand>
</feature>
<feature type="binding site" evidence="1">
    <location>
        <position position="63"/>
    </location>
    <ligand>
        <name>[4Fe-4S] cluster</name>
        <dbReference type="ChEBI" id="CHEBI:49883"/>
        <label>1</label>
    </ligand>
</feature>
<feature type="binding site" evidence="1">
    <location>
        <position position="101"/>
    </location>
    <ligand>
        <name>[4Fe-4S] cluster</name>
        <dbReference type="ChEBI" id="CHEBI:49883"/>
        <label>1</label>
    </ligand>
</feature>
<feature type="binding site" evidence="1">
    <location>
        <position position="179"/>
    </location>
    <ligand>
        <name>[4Fe-4S] cluster</name>
        <dbReference type="ChEBI" id="CHEBI:49883"/>
        <label>2</label>
        <note>4Fe-4S-S-AdoMet</note>
    </ligand>
</feature>
<feature type="binding site" evidence="1">
    <location>
        <position position="183"/>
    </location>
    <ligand>
        <name>[4Fe-4S] cluster</name>
        <dbReference type="ChEBI" id="CHEBI:49883"/>
        <label>2</label>
        <note>4Fe-4S-S-AdoMet</note>
    </ligand>
</feature>
<feature type="binding site" evidence="1">
    <location>
        <position position="186"/>
    </location>
    <ligand>
        <name>[4Fe-4S] cluster</name>
        <dbReference type="ChEBI" id="CHEBI:49883"/>
        <label>2</label>
        <note>4Fe-4S-S-AdoMet</note>
    </ligand>
</feature>
<gene>
    <name evidence="1" type="primary">miaB</name>
    <name type="ordered locus">Oant_0758</name>
</gene>
<keyword id="KW-0004">4Fe-4S</keyword>
<keyword id="KW-0963">Cytoplasm</keyword>
<keyword id="KW-0408">Iron</keyword>
<keyword id="KW-0411">Iron-sulfur</keyword>
<keyword id="KW-0479">Metal-binding</keyword>
<keyword id="KW-1185">Reference proteome</keyword>
<keyword id="KW-0949">S-adenosyl-L-methionine</keyword>
<keyword id="KW-0808">Transferase</keyword>
<keyword id="KW-0819">tRNA processing</keyword>
<dbReference type="EC" id="2.8.4.3" evidence="1"/>
<dbReference type="EMBL" id="CP000758">
    <property type="protein sequence ID" value="ABS13480.1"/>
    <property type="molecule type" value="Genomic_DNA"/>
</dbReference>
<dbReference type="RefSeq" id="WP_012091001.1">
    <property type="nucleotide sequence ID" value="NC_009667.1"/>
</dbReference>
<dbReference type="SMR" id="A6WWX6"/>
<dbReference type="STRING" id="439375.Oant_0758"/>
<dbReference type="KEGG" id="oan:Oant_0758"/>
<dbReference type="PATRIC" id="fig|439375.7.peg.801"/>
<dbReference type="eggNOG" id="COG0621">
    <property type="taxonomic scope" value="Bacteria"/>
</dbReference>
<dbReference type="HOGENOM" id="CLU_018697_2_2_5"/>
<dbReference type="PhylomeDB" id="A6WWX6"/>
<dbReference type="Proteomes" id="UP000002301">
    <property type="component" value="Chromosome 1"/>
</dbReference>
<dbReference type="GO" id="GO:0005829">
    <property type="term" value="C:cytosol"/>
    <property type="evidence" value="ECO:0007669"/>
    <property type="project" value="TreeGrafter"/>
</dbReference>
<dbReference type="GO" id="GO:0051539">
    <property type="term" value="F:4 iron, 4 sulfur cluster binding"/>
    <property type="evidence" value="ECO:0007669"/>
    <property type="project" value="UniProtKB-UniRule"/>
</dbReference>
<dbReference type="GO" id="GO:0046872">
    <property type="term" value="F:metal ion binding"/>
    <property type="evidence" value="ECO:0007669"/>
    <property type="project" value="UniProtKB-KW"/>
</dbReference>
<dbReference type="GO" id="GO:0035597">
    <property type="term" value="F:N6-isopentenyladenosine methylthiotransferase activity"/>
    <property type="evidence" value="ECO:0007669"/>
    <property type="project" value="TreeGrafter"/>
</dbReference>
<dbReference type="CDD" id="cd01335">
    <property type="entry name" value="Radical_SAM"/>
    <property type="match status" value="1"/>
</dbReference>
<dbReference type="FunFam" id="3.40.50.12160:FF:000003">
    <property type="entry name" value="CDK5 regulatory subunit-associated protein 1"/>
    <property type="match status" value="1"/>
</dbReference>
<dbReference type="FunFam" id="3.80.30.20:FF:000001">
    <property type="entry name" value="tRNA-2-methylthio-N(6)-dimethylallyladenosine synthase 2"/>
    <property type="match status" value="1"/>
</dbReference>
<dbReference type="Gene3D" id="3.40.50.12160">
    <property type="entry name" value="Methylthiotransferase, N-terminal domain"/>
    <property type="match status" value="1"/>
</dbReference>
<dbReference type="Gene3D" id="3.80.30.20">
    <property type="entry name" value="tm_1862 like domain"/>
    <property type="match status" value="1"/>
</dbReference>
<dbReference type="HAMAP" id="MF_01864">
    <property type="entry name" value="tRNA_metthiotr_MiaB"/>
    <property type="match status" value="1"/>
</dbReference>
<dbReference type="InterPro" id="IPR006638">
    <property type="entry name" value="Elp3/MiaA/NifB-like_rSAM"/>
</dbReference>
<dbReference type="InterPro" id="IPR005839">
    <property type="entry name" value="Methylthiotransferase"/>
</dbReference>
<dbReference type="InterPro" id="IPR020612">
    <property type="entry name" value="Methylthiotransferase_CS"/>
</dbReference>
<dbReference type="InterPro" id="IPR013848">
    <property type="entry name" value="Methylthiotransferase_N"/>
</dbReference>
<dbReference type="InterPro" id="IPR038135">
    <property type="entry name" value="Methylthiotransferase_N_sf"/>
</dbReference>
<dbReference type="InterPro" id="IPR006463">
    <property type="entry name" value="MiaB_methiolase"/>
</dbReference>
<dbReference type="InterPro" id="IPR007197">
    <property type="entry name" value="rSAM"/>
</dbReference>
<dbReference type="InterPro" id="IPR023404">
    <property type="entry name" value="rSAM_horseshoe"/>
</dbReference>
<dbReference type="InterPro" id="IPR002792">
    <property type="entry name" value="TRAM_dom"/>
</dbReference>
<dbReference type="NCBIfam" id="TIGR01574">
    <property type="entry name" value="miaB-methiolase"/>
    <property type="match status" value="1"/>
</dbReference>
<dbReference type="NCBIfam" id="TIGR00089">
    <property type="entry name" value="MiaB/RimO family radical SAM methylthiotransferase"/>
    <property type="match status" value="1"/>
</dbReference>
<dbReference type="PANTHER" id="PTHR43020">
    <property type="entry name" value="CDK5 REGULATORY SUBUNIT-ASSOCIATED PROTEIN 1"/>
    <property type="match status" value="1"/>
</dbReference>
<dbReference type="PANTHER" id="PTHR43020:SF2">
    <property type="entry name" value="MITOCHONDRIAL TRNA METHYLTHIOTRANSFERASE CDK5RAP1"/>
    <property type="match status" value="1"/>
</dbReference>
<dbReference type="Pfam" id="PF04055">
    <property type="entry name" value="Radical_SAM"/>
    <property type="match status" value="1"/>
</dbReference>
<dbReference type="Pfam" id="PF01938">
    <property type="entry name" value="TRAM"/>
    <property type="match status" value="1"/>
</dbReference>
<dbReference type="Pfam" id="PF00919">
    <property type="entry name" value="UPF0004"/>
    <property type="match status" value="1"/>
</dbReference>
<dbReference type="SFLD" id="SFLDF00273">
    <property type="entry name" value="(dimethylallyl)adenosine_tRNA"/>
    <property type="match status" value="1"/>
</dbReference>
<dbReference type="SFLD" id="SFLDG01082">
    <property type="entry name" value="B12-binding_domain_containing"/>
    <property type="match status" value="1"/>
</dbReference>
<dbReference type="SFLD" id="SFLDS00029">
    <property type="entry name" value="Radical_SAM"/>
    <property type="match status" value="1"/>
</dbReference>
<dbReference type="SMART" id="SM00729">
    <property type="entry name" value="Elp3"/>
    <property type="match status" value="1"/>
</dbReference>
<dbReference type="SUPFAM" id="SSF102114">
    <property type="entry name" value="Radical SAM enzymes"/>
    <property type="match status" value="1"/>
</dbReference>
<dbReference type="PROSITE" id="PS51449">
    <property type="entry name" value="MTTASE_N"/>
    <property type="match status" value="1"/>
</dbReference>
<dbReference type="PROSITE" id="PS01278">
    <property type="entry name" value="MTTASE_RADICAL"/>
    <property type="match status" value="1"/>
</dbReference>
<dbReference type="PROSITE" id="PS51918">
    <property type="entry name" value="RADICAL_SAM"/>
    <property type="match status" value="1"/>
</dbReference>
<dbReference type="PROSITE" id="PS50926">
    <property type="entry name" value="TRAM"/>
    <property type="match status" value="1"/>
</dbReference>
<evidence type="ECO:0000255" key="1">
    <source>
        <dbReference type="HAMAP-Rule" id="MF_01864"/>
    </source>
</evidence>
<evidence type="ECO:0000255" key="2">
    <source>
        <dbReference type="PROSITE-ProRule" id="PRU01266"/>
    </source>
</evidence>
<organism>
    <name type="scientific">Brucella anthropi (strain ATCC 49188 / DSM 6882 / CCUG 24695 / JCM 21032 / LMG 3331 / NBRC 15819 / NCTC 12168 / Alc 37)</name>
    <name type="common">Ochrobactrum anthropi</name>
    <dbReference type="NCBI Taxonomy" id="439375"/>
    <lineage>
        <taxon>Bacteria</taxon>
        <taxon>Pseudomonadati</taxon>
        <taxon>Pseudomonadota</taxon>
        <taxon>Alphaproteobacteria</taxon>
        <taxon>Hyphomicrobiales</taxon>
        <taxon>Brucellaceae</taxon>
        <taxon>Brucella/Ochrobactrum group</taxon>
        <taxon>Brucella</taxon>
    </lineage>
</organism>
<sequence length="462" mass="51835">MSDNITDLEPTAERPNVRKVFVKTYGCQMNVYDSQRMADSLAAEGYVATDTPDDADLVLLNTCHIREKASEKLYSALGRLRKMKDAREANGKELTIGVAGCVAQAEGQEILRRAPNVDLVIGPQTYHRLPNALARVRSGEKVVETEYALEDKFEHLPSPKREETRKRGVSAFLTVQEGCDKFCTFCVVPYTRGSEVSRSVKQIVAEAERLADSGVRELTLLGQNVNAWHGAGDDGREWGLGELLFRLARIPGIARLRYTTSHPRDMDDSLIAAHRDLRQLMPYLHLPVQSGSDRILKAMNRRHKADEYVRLIERIREVRPDLALSGDFIVGFPGETDQDFEDTMRLVRDVNYAQAYSFKYSPRPGTPGADLDDHVEEAVKDERLQRLQALLSEQQYAFQDSMIGREMDVLLEKPGRVAGQMVGRSPWLLPVIIDDSNDRVGDIIHVKITSTGTNSLIAQKLA</sequence>
<reference key="1">
    <citation type="journal article" date="2011" name="J. Bacteriol.">
        <title>Genome of Ochrobactrum anthropi ATCC 49188 T, a versatile opportunistic pathogen and symbiont of several eukaryotic hosts.</title>
        <authorList>
            <person name="Chain P.S."/>
            <person name="Lang D.M."/>
            <person name="Comerci D.J."/>
            <person name="Malfatti S.A."/>
            <person name="Vergez L.M."/>
            <person name="Shin M."/>
            <person name="Ugalde R.A."/>
            <person name="Garcia E."/>
            <person name="Tolmasky M.E."/>
        </authorList>
    </citation>
    <scope>NUCLEOTIDE SEQUENCE [LARGE SCALE GENOMIC DNA]</scope>
    <source>
        <strain>ATCC 49188 / DSM 6882 / CCUG 24695 / JCM 21032 / LMG 3331 / NBRC 15819 / NCTC 12168 / Alc 37</strain>
    </source>
</reference>
<accession>A6WWX6</accession>
<comment type="function">
    <text evidence="1">Catalyzes the methylthiolation of N6-(dimethylallyl)adenosine (i(6)A), leading to the formation of 2-methylthio-N6-(dimethylallyl)adenosine (ms(2)i(6)A) at position 37 in tRNAs that read codons beginning with uridine.</text>
</comment>
<comment type="catalytic activity">
    <reaction evidence="1">
        <text>N(6)-dimethylallyladenosine(37) in tRNA + (sulfur carrier)-SH + AH2 + 2 S-adenosyl-L-methionine = 2-methylsulfanyl-N(6)-dimethylallyladenosine(37) in tRNA + (sulfur carrier)-H + 5'-deoxyadenosine + L-methionine + A + S-adenosyl-L-homocysteine + 2 H(+)</text>
        <dbReference type="Rhea" id="RHEA:37067"/>
        <dbReference type="Rhea" id="RHEA-COMP:10375"/>
        <dbReference type="Rhea" id="RHEA-COMP:10376"/>
        <dbReference type="Rhea" id="RHEA-COMP:14737"/>
        <dbReference type="Rhea" id="RHEA-COMP:14739"/>
        <dbReference type="ChEBI" id="CHEBI:13193"/>
        <dbReference type="ChEBI" id="CHEBI:15378"/>
        <dbReference type="ChEBI" id="CHEBI:17319"/>
        <dbReference type="ChEBI" id="CHEBI:17499"/>
        <dbReference type="ChEBI" id="CHEBI:29917"/>
        <dbReference type="ChEBI" id="CHEBI:57844"/>
        <dbReference type="ChEBI" id="CHEBI:57856"/>
        <dbReference type="ChEBI" id="CHEBI:59789"/>
        <dbReference type="ChEBI" id="CHEBI:64428"/>
        <dbReference type="ChEBI" id="CHEBI:74415"/>
        <dbReference type="ChEBI" id="CHEBI:74417"/>
        <dbReference type="EC" id="2.8.4.3"/>
    </reaction>
</comment>
<comment type="cofactor">
    <cofactor evidence="1">
        <name>[4Fe-4S] cluster</name>
        <dbReference type="ChEBI" id="CHEBI:49883"/>
    </cofactor>
    <text evidence="1">Binds 2 [4Fe-4S] clusters. One cluster is coordinated with 3 cysteines and an exchangeable S-adenosyl-L-methionine.</text>
</comment>
<comment type="subunit">
    <text evidence="1">Monomer.</text>
</comment>
<comment type="subcellular location">
    <subcellularLocation>
        <location evidence="1">Cytoplasm</location>
    </subcellularLocation>
</comment>
<comment type="similarity">
    <text evidence="1">Belongs to the methylthiotransferase family. MiaB subfamily.</text>
</comment>
<proteinExistence type="inferred from homology"/>
<name>MIAB_BRUA4</name>
<protein>
    <recommendedName>
        <fullName evidence="1">tRNA-2-methylthio-N(6)-dimethylallyladenosine synthase</fullName>
        <ecNumber evidence="1">2.8.4.3</ecNumber>
    </recommendedName>
    <alternativeName>
        <fullName evidence="1">(Dimethylallyl)adenosine tRNA methylthiotransferase MiaB</fullName>
    </alternativeName>
    <alternativeName>
        <fullName evidence="1">tRNA-i(6)A37 methylthiotransferase</fullName>
    </alternativeName>
</protein>